<name>H6ST1_MOUSE</name>
<organism>
    <name type="scientific">Mus musculus</name>
    <name type="common">Mouse</name>
    <dbReference type="NCBI Taxonomy" id="10090"/>
    <lineage>
        <taxon>Eukaryota</taxon>
        <taxon>Metazoa</taxon>
        <taxon>Chordata</taxon>
        <taxon>Craniata</taxon>
        <taxon>Vertebrata</taxon>
        <taxon>Euteleostomi</taxon>
        <taxon>Mammalia</taxon>
        <taxon>Eutheria</taxon>
        <taxon>Euarchontoglires</taxon>
        <taxon>Glires</taxon>
        <taxon>Rodentia</taxon>
        <taxon>Myomorpha</taxon>
        <taxon>Muroidea</taxon>
        <taxon>Muridae</taxon>
        <taxon>Murinae</taxon>
        <taxon>Mus</taxon>
        <taxon>Mus</taxon>
    </lineage>
</organism>
<feature type="chain" id="PRO_0000190802" description="Heparan-sulfate 6-O-sulfotransferase 1">
    <location>
        <begin position="1"/>
        <end position="411"/>
    </location>
</feature>
<feature type="topological domain" description="Cytoplasmic" evidence="3">
    <location>
        <begin position="1"/>
        <end position="19"/>
    </location>
</feature>
<feature type="transmembrane region" description="Helical; Signal-anchor for type II membrane protein" evidence="3">
    <location>
        <begin position="20"/>
        <end position="37"/>
    </location>
</feature>
<feature type="topological domain" description="Lumenal" evidence="3">
    <location>
        <begin position="38"/>
        <end position="411"/>
    </location>
</feature>
<feature type="region of interest" description="Disordered" evidence="4">
    <location>
        <begin position="380"/>
        <end position="401"/>
    </location>
</feature>
<feature type="coiled-coil region" evidence="3">
    <location>
        <begin position="352"/>
        <end position="386"/>
    </location>
</feature>
<feature type="active site" description="Proton acceptor" evidence="2">
    <location>
        <position position="150"/>
    </location>
</feature>
<feature type="binding site" evidence="2">
    <location>
        <begin position="93"/>
        <end position="101"/>
    </location>
    <ligand>
        <name>3'-phosphoadenylyl sulfate</name>
        <dbReference type="ChEBI" id="CHEBI:58339"/>
    </ligand>
</feature>
<feature type="binding site" evidence="2">
    <location>
        <begin position="123"/>
        <end position="124"/>
    </location>
    <ligand>
        <name>substrate</name>
    </ligand>
</feature>
<feature type="binding site" evidence="2">
    <location>
        <position position="140"/>
    </location>
    <ligand>
        <name>substrate</name>
    </ligand>
</feature>
<feature type="binding site" evidence="2">
    <location>
        <position position="145"/>
    </location>
    <ligand>
        <name>substrate</name>
    </ligand>
</feature>
<feature type="binding site" evidence="2">
    <location>
        <position position="150"/>
    </location>
    <ligand>
        <name>substrate</name>
    </ligand>
</feature>
<feature type="binding site" evidence="2">
    <location>
        <position position="185"/>
    </location>
    <ligand>
        <name>3'-phosphoadenylyl sulfate</name>
        <dbReference type="ChEBI" id="CHEBI:58339"/>
    </ligand>
</feature>
<feature type="binding site" evidence="2">
    <location>
        <position position="193"/>
    </location>
    <ligand>
        <name>3'-phosphoadenylyl sulfate</name>
        <dbReference type="ChEBI" id="CHEBI:58339"/>
    </ligand>
</feature>
<feature type="binding site" evidence="2">
    <location>
        <position position="197"/>
    </location>
    <ligand>
        <name>substrate</name>
    </ligand>
</feature>
<feature type="binding site" evidence="2">
    <location>
        <position position="204"/>
    </location>
    <ligand>
        <name>substrate</name>
    </ligand>
</feature>
<feature type="binding site" evidence="2">
    <location>
        <begin position="317"/>
        <end position="319"/>
    </location>
    <ligand>
        <name>3'-phosphoadenylyl sulfate</name>
        <dbReference type="ChEBI" id="CHEBI:58339"/>
    </ligand>
</feature>
<feature type="binding site" evidence="2">
    <location>
        <begin position="323"/>
        <end position="324"/>
    </location>
    <ligand>
        <name>3'-phosphoadenylyl sulfate</name>
        <dbReference type="ChEBI" id="CHEBI:58339"/>
    </ligand>
</feature>
<feature type="glycosylation site" description="N-linked (GlcNAc...) asparagine" evidence="3">
    <location>
        <position position="264"/>
    </location>
</feature>
<feature type="glycosylation site" description="N-linked (GlcNAc...) asparagine" evidence="3">
    <location>
        <position position="320"/>
    </location>
</feature>
<feature type="sequence conflict" description="In Ref. 2; BAE38155." evidence="8" ref="2">
    <original>C</original>
    <variation>S</variation>
    <location>
        <position position="125"/>
    </location>
</feature>
<proteinExistence type="evidence at protein level"/>
<accession>Q9QYK5</accession>
<accession>Q3TK52</accession>
<accession>Q3TKK0</accession>
<accession>Q3TND4</accession>
<accession>Q3TZT5</accession>
<protein>
    <recommendedName>
        <fullName evidence="8">Heparan-sulfate 6-O-sulfotransferase 1</fullName>
        <shortName>HS6ST-1</shortName>
        <shortName>mHS6ST-1</shortName>
        <ecNumber evidence="5">2.8.2.-</ecNumber>
    </recommendedName>
</protein>
<gene>
    <name evidence="9" type="primary">Hs6st1</name>
</gene>
<reference key="1">
    <citation type="journal article" date="2000" name="J. Biol. Chem.">
        <title>The occurrence of three isoforms of heparan sulfate 6-O-sulfotransferase having different specificities for hexuronic acid adjacent to the targeted N-sulfoglucosamine.</title>
        <authorList>
            <person name="Habuchi H."/>
            <person name="Tanaka M."/>
            <person name="Habuchi O."/>
            <person name="Yoshida K."/>
            <person name="Suzuki H."/>
            <person name="Ban K."/>
            <person name="Kimata K."/>
        </authorList>
    </citation>
    <scope>NUCLEOTIDE SEQUENCE [MRNA]</scope>
    <scope>FUNCTION</scope>
    <scope>CATALYTIC ACTIVITY</scope>
    <scope>BIOPHYSICOCHEMICAL PROPERTIES</scope>
    <scope>TISSUE SPECIFICITY</scope>
    <scope>DOMAIN</scope>
    <source>
        <tissue>Brain</tissue>
    </source>
</reference>
<reference key="2">
    <citation type="journal article" date="2005" name="Science">
        <title>The transcriptional landscape of the mammalian genome.</title>
        <authorList>
            <person name="Carninci P."/>
            <person name="Kasukawa T."/>
            <person name="Katayama S."/>
            <person name="Gough J."/>
            <person name="Frith M.C."/>
            <person name="Maeda N."/>
            <person name="Oyama R."/>
            <person name="Ravasi T."/>
            <person name="Lenhard B."/>
            <person name="Wells C."/>
            <person name="Kodzius R."/>
            <person name="Shimokawa K."/>
            <person name="Bajic V.B."/>
            <person name="Brenner S.E."/>
            <person name="Batalov S."/>
            <person name="Forrest A.R."/>
            <person name="Zavolan M."/>
            <person name="Davis M.J."/>
            <person name="Wilming L.G."/>
            <person name="Aidinis V."/>
            <person name="Allen J.E."/>
            <person name="Ambesi-Impiombato A."/>
            <person name="Apweiler R."/>
            <person name="Aturaliya R.N."/>
            <person name="Bailey T.L."/>
            <person name="Bansal M."/>
            <person name="Baxter L."/>
            <person name="Beisel K.W."/>
            <person name="Bersano T."/>
            <person name="Bono H."/>
            <person name="Chalk A.M."/>
            <person name="Chiu K.P."/>
            <person name="Choudhary V."/>
            <person name="Christoffels A."/>
            <person name="Clutterbuck D.R."/>
            <person name="Crowe M.L."/>
            <person name="Dalla E."/>
            <person name="Dalrymple B.P."/>
            <person name="de Bono B."/>
            <person name="Della Gatta G."/>
            <person name="di Bernardo D."/>
            <person name="Down T."/>
            <person name="Engstrom P."/>
            <person name="Fagiolini M."/>
            <person name="Faulkner G."/>
            <person name="Fletcher C.F."/>
            <person name="Fukushima T."/>
            <person name="Furuno M."/>
            <person name="Futaki S."/>
            <person name="Gariboldi M."/>
            <person name="Georgii-Hemming P."/>
            <person name="Gingeras T.R."/>
            <person name="Gojobori T."/>
            <person name="Green R.E."/>
            <person name="Gustincich S."/>
            <person name="Harbers M."/>
            <person name="Hayashi Y."/>
            <person name="Hensch T.K."/>
            <person name="Hirokawa N."/>
            <person name="Hill D."/>
            <person name="Huminiecki L."/>
            <person name="Iacono M."/>
            <person name="Ikeo K."/>
            <person name="Iwama A."/>
            <person name="Ishikawa T."/>
            <person name="Jakt M."/>
            <person name="Kanapin A."/>
            <person name="Katoh M."/>
            <person name="Kawasawa Y."/>
            <person name="Kelso J."/>
            <person name="Kitamura H."/>
            <person name="Kitano H."/>
            <person name="Kollias G."/>
            <person name="Krishnan S.P."/>
            <person name="Kruger A."/>
            <person name="Kummerfeld S.K."/>
            <person name="Kurochkin I.V."/>
            <person name="Lareau L.F."/>
            <person name="Lazarevic D."/>
            <person name="Lipovich L."/>
            <person name="Liu J."/>
            <person name="Liuni S."/>
            <person name="McWilliam S."/>
            <person name="Madan Babu M."/>
            <person name="Madera M."/>
            <person name="Marchionni L."/>
            <person name="Matsuda H."/>
            <person name="Matsuzawa S."/>
            <person name="Miki H."/>
            <person name="Mignone F."/>
            <person name="Miyake S."/>
            <person name="Morris K."/>
            <person name="Mottagui-Tabar S."/>
            <person name="Mulder N."/>
            <person name="Nakano N."/>
            <person name="Nakauchi H."/>
            <person name="Ng P."/>
            <person name="Nilsson R."/>
            <person name="Nishiguchi S."/>
            <person name="Nishikawa S."/>
            <person name="Nori F."/>
            <person name="Ohara O."/>
            <person name="Okazaki Y."/>
            <person name="Orlando V."/>
            <person name="Pang K.C."/>
            <person name="Pavan W.J."/>
            <person name="Pavesi G."/>
            <person name="Pesole G."/>
            <person name="Petrovsky N."/>
            <person name="Piazza S."/>
            <person name="Reed J."/>
            <person name="Reid J.F."/>
            <person name="Ring B.Z."/>
            <person name="Ringwald M."/>
            <person name="Rost B."/>
            <person name="Ruan Y."/>
            <person name="Salzberg S.L."/>
            <person name="Sandelin A."/>
            <person name="Schneider C."/>
            <person name="Schoenbach C."/>
            <person name="Sekiguchi K."/>
            <person name="Semple C.A."/>
            <person name="Seno S."/>
            <person name="Sessa L."/>
            <person name="Sheng Y."/>
            <person name="Shibata Y."/>
            <person name="Shimada H."/>
            <person name="Shimada K."/>
            <person name="Silva D."/>
            <person name="Sinclair B."/>
            <person name="Sperling S."/>
            <person name="Stupka E."/>
            <person name="Sugiura K."/>
            <person name="Sultana R."/>
            <person name="Takenaka Y."/>
            <person name="Taki K."/>
            <person name="Tammoja K."/>
            <person name="Tan S.L."/>
            <person name="Tang S."/>
            <person name="Taylor M.S."/>
            <person name="Tegner J."/>
            <person name="Teichmann S.A."/>
            <person name="Ueda H.R."/>
            <person name="van Nimwegen E."/>
            <person name="Verardo R."/>
            <person name="Wei C.L."/>
            <person name="Yagi K."/>
            <person name="Yamanishi H."/>
            <person name="Zabarovsky E."/>
            <person name="Zhu S."/>
            <person name="Zimmer A."/>
            <person name="Hide W."/>
            <person name="Bult C."/>
            <person name="Grimmond S.M."/>
            <person name="Teasdale R.D."/>
            <person name="Liu E.T."/>
            <person name="Brusic V."/>
            <person name="Quackenbush J."/>
            <person name="Wahlestedt C."/>
            <person name="Mattick J.S."/>
            <person name="Hume D.A."/>
            <person name="Kai C."/>
            <person name="Sasaki D."/>
            <person name="Tomaru Y."/>
            <person name="Fukuda S."/>
            <person name="Kanamori-Katayama M."/>
            <person name="Suzuki M."/>
            <person name="Aoki J."/>
            <person name="Arakawa T."/>
            <person name="Iida J."/>
            <person name="Imamura K."/>
            <person name="Itoh M."/>
            <person name="Kato T."/>
            <person name="Kawaji H."/>
            <person name="Kawagashira N."/>
            <person name="Kawashima T."/>
            <person name="Kojima M."/>
            <person name="Kondo S."/>
            <person name="Konno H."/>
            <person name="Nakano K."/>
            <person name="Ninomiya N."/>
            <person name="Nishio T."/>
            <person name="Okada M."/>
            <person name="Plessy C."/>
            <person name="Shibata K."/>
            <person name="Shiraki T."/>
            <person name="Suzuki S."/>
            <person name="Tagami M."/>
            <person name="Waki K."/>
            <person name="Watahiki A."/>
            <person name="Okamura-Oho Y."/>
            <person name="Suzuki H."/>
            <person name="Kawai J."/>
            <person name="Hayashizaki Y."/>
        </authorList>
    </citation>
    <scope>NUCLEOTIDE SEQUENCE [LARGE SCALE MRNA]</scope>
    <source>
        <strain>C57BL/6J</strain>
        <strain>NOD</strain>
        <tissue>Blastocyst</tissue>
        <tissue>Spleen</tissue>
    </source>
</reference>
<reference key="3">
    <citation type="journal article" date="2004" name="Genome Res.">
        <title>The status, quality, and expansion of the NIH full-length cDNA project: the Mammalian Gene Collection (MGC).</title>
        <authorList>
            <consortium name="The MGC Project Team"/>
        </authorList>
    </citation>
    <scope>NUCLEOTIDE SEQUENCE [LARGE SCALE MRNA]</scope>
    <source>
        <tissue>Olfactory epithelium</tissue>
    </source>
</reference>
<reference key="4">
    <citation type="journal article" date="2007" name="J. Biol. Chem.">
        <title>Mice deficient in heparan sulfate 6-O-sulfotransferase-1 exhibit defective heparan sulfate biosynthesis, abnormal placentation, and late embryonic lethality.</title>
        <authorList>
            <person name="Habuchi H."/>
            <person name="Nagai N."/>
            <person name="Sugaya N."/>
            <person name="Atsumi F."/>
            <person name="Stevens R.L."/>
            <person name="Kimata K."/>
        </authorList>
    </citation>
    <scope>DISRUPTION PHENOTYPE</scope>
</reference>
<reference key="5">
    <citation type="journal article" date="2008" name="Genesis">
        <title>Systemic inactivation of Hs6st1 in mice is associated with late postnatal mortality without major defects in organogenesis.</title>
        <authorList>
            <person name="Izvolsky K.I."/>
            <person name="Lu J."/>
            <person name="Martin G."/>
            <person name="Albrecht K.H."/>
            <person name="Cardoso W.V."/>
        </authorList>
    </citation>
    <scope>DISRUPTION PHENOTYPE</scope>
</reference>
<evidence type="ECO:0000250" key="1"/>
<evidence type="ECO:0000250" key="2">
    <source>
        <dbReference type="UniProtKB" id="A0MGZ7"/>
    </source>
</evidence>
<evidence type="ECO:0000255" key="3"/>
<evidence type="ECO:0000256" key="4">
    <source>
        <dbReference type="SAM" id="MobiDB-lite"/>
    </source>
</evidence>
<evidence type="ECO:0000269" key="5">
    <source>
    </source>
</evidence>
<evidence type="ECO:0000269" key="6">
    <source>
    </source>
</evidence>
<evidence type="ECO:0000269" key="7">
    <source>
    </source>
</evidence>
<evidence type="ECO:0000305" key="8"/>
<evidence type="ECO:0000312" key="9">
    <source>
        <dbReference type="MGI" id="MGI:1354958"/>
    </source>
</evidence>
<sequence length="411" mass="48302">MRRRRAGGRTMVERASKFVLVVAGSACFMLILYQYAGPGLSLGAPGGRVPPDDLDLFPTPDPHYEKKYYFPVRELERSLRFDMKGDDVIVFLHIQKTGGTTFGRHLVQNVRLEVPCDCRPGQKKCTCYRPNRRETWLFSRFSTGWSCGLHADWTELTNCVPGVLDRRDPAGLRSPRKFYYITLLRDPVSRYLSEWRHVQRGATWKTSLHMCDGRTPTPEELPPCYEGTDWSGCTLQEFMDCPYNLANNRQVRMLADLSLVGCYNLSFIPESKRAQLLLESAKKNLRGMAFFGLTEFQRKTQYLFERTFNLKFIRPFMQYNSTRAGGVEVDEDTIRHIEELNDLDMQLYDYAKDLFQQRYQYKRQLERREQRLRNREERLLHRSKEALPREDPEEPGRVPTEDYMSHIIEKW</sequence>
<keyword id="KW-0175">Coiled coil</keyword>
<keyword id="KW-0325">Glycoprotein</keyword>
<keyword id="KW-0472">Membrane</keyword>
<keyword id="KW-1185">Reference proteome</keyword>
<keyword id="KW-0735">Signal-anchor</keyword>
<keyword id="KW-0808">Transferase</keyword>
<keyword id="KW-0812">Transmembrane</keyword>
<keyword id="KW-1133">Transmembrane helix</keyword>
<comment type="function">
    <text evidence="5">6-O-sulfation enzyme which catalyzes the transfer of sulfate from 3'-phosphoadenosine 5'-phosphosulfate (PAPS) to position 6 of the N-sulfoglucosamine residue (GlcNS) of heparan sulfate. Critical for normal neuronal development where it may play a role in neuron branching. May also play a role in limb development. May prefer iduronic acid.</text>
</comment>
<comment type="catalytic activity">
    <reaction evidence="5">
        <text>alpha-D-glucosaminyl-[heparan sulfate](n) + 3'-phosphoadenylyl sulfate = 6-sulfo-alpha-D-glucosaminyl-[heparan sulfate](n) + adenosine 3',5'-bisphosphate + H(+)</text>
        <dbReference type="Rhea" id="RHEA:56604"/>
        <dbReference type="Rhea" id="RHEA-COMP:9830"/>
        <dbReference type="Rhea" id="RHEA-COMP:14621"/>
        <dbReference type="ChEBI" id="CHEBI:15378"/>
        <dbReference type="ChEBI" id="CHEBI:58339"/>
        <dbReference type="ChEBI" id="CHEBI:58343"/>
        <dbReference type="ChEBI" id="CHEBI:58388"/>
        <dbReference type="ChEBI" id="CHEBI:140604"/>
    </reaction>
</comment>
<comment type="biophysicochemical properties">
    <kinetics>
        <KM evidence="5">10 uM for CDSNS-heparin</KM>
        <KM evidence="5">100 uM for NS-heparosan</KM>
    </kinetics>
</comment>
<comment type="subcellular location">
    <subcellularLocation>
        <location evidence="8">Membrane</location>
        <topology evidence="8">Single-pass type II membrane protein</topology>
    </subcellularLocation>
</comment>
<comment type="tissue specificity">
    <text evidence="5">Expressed in fetal brain and liver.</text>
</comment>
<comment type="PTM">
    <text evidence="1">N-glycosylated.</text>
</comment>
<comment type="disruption phenotype">
    <text evidence="6 7">According to PubMed:17405882 most mice die between embryonic day 15.5 and the perinatal stage. Those that survive are considerably smaller than their wild-type littermates and exhibit development abnormalities including a reduction in the number of fetal microvessels in the labyrinthine zone of the placenta. However, according to PubMed:18196599, pups are viable and grossly normal at birth. During early adulthood, however, mice fail to thrive and exhibit growth retardation, bodyweight loss, enlargement of airspaces in the lung and, in some cases, lethality.</text>
</comment>
<comment type="similarity">
    <text evidence="8">Belongs to the sulfotransferase 6 family.</text>
</comment>
<comment type="sequence caution" evidence="8">
    <conflict type="erroneous initiation">
        <sequence resource="EMBL-CDS" id="AAH52316"/>
    </conflict>
</comment>
<comment type="sequence caution" evidence="8">
    <conflict type="erroneous initiation">
        <sequence resource="EMBL-CDS" id="BAA89248"/>
    </conflict>
</comment>
<dbReference type="EC" id="2.8.2.-" evidence="5"/>
<dbReference type="EMBL" id="AB024566">
    <property type="protein sequence ID" value="BAA89248.1"/>
    <property type="status" value="ALT_INIT"/>
    <property type="molecule type" value="mRNA"/>
</dbReference>
<dbReference type="EMBL" id="AK157556">
    <property type="protein sequence ID" value="BAE34122.1"/>
    <property type="molecule type" value="mRNA"/>
</dbReference>
<dbReference type="EMBL" id="AK165385">
    <property type="protein sequence ID" value="BAE38155.1"/>
    <property type="molecule type" value="mRNA"/>
</dbReference>
<dbReference type="EMBL" id="AK166962">
    <property type="protein sequence ID" value="BAE39145.1"/>
    <property type="molecule type" value="mRNA"/>
</dbReference>
<dbReference type="EMBL" id="AK167151">
    <property type="protein sequence ID" value="BAE39293.1"/>
    <property type="molecule type" value="mRNA"/>
</dbReference>
<dbReference type="EMBL" id="BC052316">
    <property type="protein sequence ID" value="AAH52316.1"/>
    <property type="status" value="ALT_INIT"/>
    <property type="molecule type" value="mRNA"/>
</dbReference>
<dbReference type="CCDS" id="CCDS48237.1"/>
<dbReference type="RefSeq" id="NP_056633.2">
    <property type="nucleotide sequence ID" value="NM_015818.2"/>
</dbReference>
<dbReference type="SMR" id="Q9QYK5"/>
<dbReference type="FunCoup" id="Q9QYK5">
    <property type="interactions" value="1159"/>
</dbReference>
<dbReference type="STRING" id="10090.ENSMUSP00000085499"/>
<dbReference type="GlyConnect" id="2371">
    <property type="glycosylation" value="2 N-Linked glycans (1 site)"/>
</dbReference>
<dbReference type="GlyCosmos" id="Q9QYK5">
    <property type="glycosylation" value="2 sites, 2 glycans"/>
</dbReference>
<dbReference type="GlyGen" id="Q9QYK5">
    <property type="glycosylation" value="3 sites, 3 N-linked glycans (1 site)"/>
</dbReference>
<dbReference type="iPTMnet" id="Q9QYK5"/>
<dbReference type="PhosphoSitePlus" id="Q9QYK5"/>
<dbReference type="PaxDb" id="10090-ENSMUSP00000085499"/>
<dbReference type="PeptideAtlas" id="Q9QYK5"/>
<dbReference type="ProteomicsDB" id="269762"/>
<dbReference type="Antibodypedia" id="33479">
    <property type="antibodies" value="106 antibodies from 18 providers"/>
</dbReference>
<dbReference type="DNASU" id="50785"/>
<dbReference type="Ensembl" id="ENSMUST00000088174.4">
    <property type="protein sequence ID" value="ENSMUSP00000085499.4"/>
    <property type="gene ID" value="ENSMUSG00000045216.8"/>
</dbReference>
<dbReference type="GeneID" id="50785"/>
<dbReference type="KEGG" id="mmu:50785"/>
<dbReference type="UCSC" id="uc007apn.2">
    <property type="organism name" value="mouse"/>
</dbReference>
<dbReference type="AGR" id="MGI:1354958"/>
<dbReference type="CTD" id="9394"/>
<dbReference type="MGI" id="MGI:1354958">
    <property type="gene designation" value="Hs6st1"/>
</dbReference>
<dbReference type="VEuPathDB" id="HostDB:ENSMUSG00000045216"/>
<dbReference type="eggNOG" id="KOG3955">
    <property type="taxonomic scope" value="Eukaryota"/>
</dbReference>
<dbReference type="GeneTree" id="ENSGT00950000183071"/>
<dbReference type="HOGENOM" id="CLU_027877_1_0_1"/>
<dbReference type="InParanoid" id="Q9QYK5"/>
<dbReference type="OMA" id="AYNELQP"/>
<dbReference type="OrthoDB" id="406981at2759"/>
<dbReference type="PhylomeDB" id="Q9QYK5"/>
<dbReference type="TreeFam" id="TF312835"/>
<dbReference type="Reactome" id="R-MMU-2022928">
    <property type="pathway name" value="HS-GAG biosynthesis"/>
</dbReference>
<dbReference type="SABIO-RK" id="Q9QYK5"/>
<dbReference type="BioGRID-ORCS" id="50785">
    <property type="hits" value="4 hits in 76 CRISPR screens"/>
</dbReference>
<dbReference type="ChiTaRS" id="Hs6st1">
    <property type="organism name" value="mouse"/>
</dbReference>
<dbReference type="PRO" id="PR:Q9QYK5"/>
<dbReference type="Proteomes" id="UP000000589">
    <property type="component" value="Chromosome 1"/>
</dbReference>
<dbReference type="RNAct" id="Q9QYK5">
    <property type="molecule type" value="protein"/>
</dbReference>
<dbReference type="Bgee" id="ENSMUSG00000045216">
    <property type="expression patterns" value="Expressed in cortical plate and 316 other cell types or tissues"/>
</dbReference>
<dbReference type="GO" id="GO:0005794">
    <property type="term" value="C:Golgi apparatus"/>
    <property type="evidence" value="ECO:0000314"/>
    <property type="project" value="MGI"/>
</dbReference>
<dbReference type="GO" id="GO:0016020">
    <property type="term" value="C:membrane"/>
    <property type="evidence" value="ECO:0007669"/>
    <property type="project" value="UniProtKB-SubCell"/>
</dbReference>
<dbReference type="GO" id="GO:0017095">
    <property type="term" value="F:heparan sulfate 6-sulfotransferase activity"/>
    <property type="evidence" value="ECO:0000314"/>
    <property type="project" value="MGI"/>
</dbReference>
<dbReference type="GO" id="GO:0001525">
    <property type="term" value="P:angiogenesis"/>
    <property type="evidence" value="ECO:0000315"/>
    <property type="project" value="MGI"/>
</dbReference>
<dbReference type="GO" id="GO:0015012">
    <property type="term" value="P:heparan sulfate proteoglycan biosynthetic process"/>
    <property type="evidence" value="ECO:0000314"/>
    <property type="project" value="MGI"/>
</dbReference>
<dbReference type="GO" id="GO:0060716">
    <property type="term" value="P:labyrinthine layer blood vessel development"/>
    <property type="evidence" value="ECO:0000315"/>
    <property type="project" value="MGI"/>
</dbReference>
<dbReference type="GO" id="GO:0048286">
    <property type="term" value="P:lung alveolus development"/>
    <property type="evidence" value="ECO:0000315"/>
    <property type="project" value="MGI"/>
</dbReference>
<dbReference type="GO" id="GO:0048666">
    <property type="term" value="P:neuron development"/>
    <property type="evidence" value="ECO:0000250"/>
    <property type="project" value="UniProtKB"/>
</dbReference>
<dbReference type="FunFam" id="3.40.50.300:FF:000347">
    <property type="entry name" value="Heparan-sulfate 6-O-sulfotransferase"/>
    <property type="match status" value="1"/>
</dbReference>
<dbReference type="Gene3D" id="3.40.50.300">
    <property type="entry name" value="P-loop containing nucleotide triphosphate hydrolases"/>
    <property type="match status" value="1"/>
</dbReference>
<dbReference type="InterPro" id="IPR010635">
    <property type="entry name" value="Heparan_SO4-6-sulfoTrfase"/>
</dbReference>
<dbReference type="InterPro" id="IPR027417">
    <property type="entry name" value="P-loop_NTPase"/>
</dbReference>
<dbReference type="InterPro" id="IPR005331">
    <property type="entry name" value="Sulfotransferase"/>
</dbReference>
<dbReference type="PANTHER" id="PTHR12812">
    <property type="entry name" value="HEPARAN SULFATE 6-O-SULFOTRANSFERASE 3"/>
    <property type="match status" value="1"/>
</dbReference>
<dbReference type="PANTHER" id="PTHR12812:SF1">
    <property type="entry name" value="HEPARAN-SULFATE 6-O-SULFOTRANSFERASE 1"/>
    <property type="match status" value="1"/>
</dbReference>
<dbReference type="Pfam" id="PF03567">
    <property type="entry name" value="Sulfotransfer_2"/>
    <property type="match status" value="1"/>
</dbReference>
<dbReference type="SUPFAM" id="SSF52540">
    <property type="entry name" value="P-loop containing nucleoside triphosphate hydrolases"/>
    <property type="match status" value="1"/>
</dbReference>